<sequence length="909" mass="100610">MWPQPHLPPHPMMSEKTRQNKLAEAKKKFTDYRQWNIAGVGTRATDTKKKKINNGTNPETTTSEGCHSPEDTQQNRAQLKEEKKASHQHQEALRREIEAQDHTIRILTCQKTELETALYYSQDAARKFEDGNLGTPSSFNLALSQAFRGSPLGCVSTSLIPGESKDLAGRLHHSWHFAGELQRALSAVSTWHKKADRYIEELTKERDALSLELYRNTITNEELKKKNAELQEKLRLAESEKSEIQLNVKELKRKLERAKFLLPQVQTNTLQEEMWRQEEELREQEKKIRKQEEKMWRQEERLREQEGKMREQEEKMRRQEKRLREQEKELREQEKELREQKKLREQEEQMQEQEEKMWEQEEKMREQEEKMWRQEERLWEQEKQMREQEQKMRDQEERMWEQDERLREKEERMREQEKMWEQVEKMREEKKMQEQEKKTRDQEEKMQEEERIREREKKMREEEETMREQEEKMQKQEENMWEQEEKEWQQQRLPEQKEKLWEQEKMQEQEEKIWEQEEKIRDQEEMWGQEKKMWRQEKMREQEDVETGGEAAGAGEADVGAGGEDAGSGAEDVGPGGEDVGAGREAAGEGGENAGAEEDVAAGGEDAGGEEDAGAGEEDMGPGGEDARGGEDAGAGEEDAGGGGDDAGAGGEDAGAGREDAGAGGEDVGAGREDAGAGGEDVGAGGEDVGAGRRRCGSSRGCRNRRRSCGNTRRCRSRRSGAEDVGPEGEDVGAGREAAGEGGENAGAEDVAAGGEDAGEEEDAGGEDAGAAREDAGAGGDDVGAGREDAGAGGEDVGAGGEDAGAGGEDAGAGGEDAGPGGEDAGAGGEDAGPGGEDAGAGGEDAGPGGEDVGPGGEDVGAGGEDVGAGGDAREGGEDTRSEREDAGEAARARGAVLRALPPSLQSSL</sequence>
<accession>Q8N9W4</accession>
<accession>A1L301</accession>
<accession>H3BMJ4</accession>
<reference key="1">
    <citation type="journal article" date="2004" name="Nat. Genet.">
        <title>Complete sequencing and characterization of 21,243 full-length human cDNAs.</title>
        <authorList>
            <person name="Ota T."/>
            <person name="Suzuki Y."/>
            <person name="Nishikawa T."/>
            <person name="Otsuki T."/>
            <person name="Sugiyama T."/>
            <person name="Irie R."/>
            <person name="Wakamatsu A."/>
            <person name="Hayashi K."/>
            <person name="Sato H."/>
            <person name="Nagai K."/>
            <person name="Kimura K."/>
            <person name="Makita H."/>
            <person name="Sekine M."/>
            <person name="Obayashi M."/>
            <person name="Nishi T."/>
            <person name="Shibahara T."/>
            <person name="Tanaka T."/>
            <person name="Ishii S."/>
            <person name="Yamamoto J."/>
            <person name="Saito K."/>
            <person name="Kawai Y."/>
            <person name="Isono Y."/>
            <person name="Nakamura Y."/>
            <person name="Nagahari K."/>
            <person name="Murakami K."/>
            <person name="Yasuda T."/>
            <person name="Iwayanagi T."/>
            <person name="Wagatsuma M."/>
            <person name="Shiratori A."/>
            <person name="Sudo H."/>
            <person name="Hosoiri T."/>
            <person name="Kaku Y."/>
            <person name="Kodaira H."/>
            <person name="Kondo H."/>
            <person name="Sugawara M."/>
            <person name="Takahashi M."/>
            <person name="Kanda K."/>
            <person name="Yokoi T."/>
            <person name="Furuya T."/>
            <person name="Kikkawa E."/>
            <person name="Omura Y."/>
            <person name="Abe K."/>
            <person name="Kamihara K."/>
            <person name="Katsuta N."/>
            <person name="Sato K."/>
            <person name="Tanikawa M."/>
            <person name="Yamazaki M."/>
            <person name="Ninomiya K."/>
            <person name="Ishibashi T."/>
            <person name="Yamashita H."/>
            <person name="Murakawa K."/>
            <person name="Fujimori K."/>
            <person name="Tanai H."/>
            <person name="Kimata M."/>
            <person name="Watanabe M."/>
            <person name="Hiraoka S."/>
            <person name="Chiba Y."/>
            <person name="Ishida S."/>
            <person name="Ono Y."/>
            <person name="Takiguchi S."/>
            <person name="Watanabe S."/>
            <person name="Yosida M."/>
            <person name="Hotuta T."/>
            <person name="Kusano J."/>
            <person name="Kanehori K."/>
            <person name="Takahashi-Fujii A."/>
            <person name="Hara H."/>
            <person name="Tanase T.-O."/>
            <person name="Nomura Y."/>
            <person name="Togiya S."/>
            <person name="Komai F."/>
            <person name="Hara R."/>
            <person name="Takeuchi K."/>
            <person name="Arita M."/>
            <person name="Imose N."/>
            <person name="Musashino K."/>
            <person name="Yuuki H."/>
            <person name="Oshima A."/>
            <person name="Sasaki N."/>
            <person name="Aotsuka S."/>
            <person name="Yoshikawa Y."/>
            <person name="Matsunawa H."/>
            <person name="Ichihara T."/>
            <person name="Shiohata N."/>
            <person name="Sano S."/>
            <person name="Moriya S."/>
            <person name="Momiyama H."/>
            <person name="Satoh N."/>
            <person name="Takami S."/>
            <person name="Terashima Y."/>
            <person name="Suzuki O."/>
            <person name="Nakagawa S."/>
            <person name="Senoh A."/>
            <person name="Mizoguchi H."/>
            <person name="Goto Y."/>
            <person name="Shimizu F."/>
            <person name="Wakebe H."/>
            <person name="Hishigaki H."/>
            <person name="Watanabe T."/>
            <person name="Sugiyama A."/>
            <person name="Takemoto M."/>
            <person name="Kawakami B."/>
            <person name="Yamazaki M."/>
            <person name="Watanabe K."/>
            <person name="Kumagai A."/>
            <person name="Itakura S."/>
            <person name="Fukuzumi Y."/>
            <person name="Fujimori Y."/>
            <person name="Komiyama M."/>
            <person name="Tashiro H."/>
            <person name="Tanigami A."/>
            <person name="Fujiwara T."/>
            <person name="Ono T."/>
            <person name="Yamada K."/>
            <person name="Fujii Y."/>
            <person name="Ozaki K."/>
            <person name="Hirao M."/>
            <person name="Ohmori Y."/>
            <person name="Kawabata A."/>
            <person name="Hikiji T."/>
            <person name="Kobatake N."/>
            <person name="Inagaki H."/>
            <person name="Ikema Y."/>
            <person name="Okamoto S."/>
            <person name="Okitani R."/>
            <person name="Kawakami T."/>
            <person name="Noguchi S."/>
            <person name="Itoh T."/>
            <person name="Shigeta K."/>
            <person name="Senba T."/>
            <person name="Matsumura K."/>
            <person name="Nakajima Y."/>
            <person name="Mizuno T."/>
            <person name="Morinaga M."/>
            <person name="Sasaki M."/>
            <person name="Togashi T."/>
            <person name="Oyama M."/>
            <person name="Hata H."/>
            <person name="Watanabe M."/>
            <person name="Komatsu T."/>
            <person name="Mizushima-Sugano J."/>
            <person name="Satoh T."/>
            <person name="Shirai Y."/>
            <person name="Takahashi Y."/>
            <person name="Nakagawa K."/>
            <person name="Okumura K."/>
            <person name="Nagase T."/>
            <person name="Nomura N."/>
            <person name="Kikuchi H."/>
            <person name="Masuho Y."/>
            <person name="Yamashita R."/>
            <person name="Nakai K."/>
            <person name="Yada T."/>
            <person name="Nakamura Y."/>
            <person name="Ohara O."/>
            <person name="Isogai T."/>
            <person name="Sugano S."/>
        </authorList>
    </citation>
    <scope>NUCLEOTIDE SEQUENCE [LARGE SCALE MRNA] (ISOFORM 1)</scope>
    <scope>VARIANTS GLY-43; HIS-54; GLY-64; ARG-191 AND PRO-235</scope>
    <source>
        <tissue>Testis</tissue>
    </source>
</reference>
<reference key="2">
    <citation type="journal article" date="2006" name="Nature">
        <title>Analysis of the DNA sequence and duplication history of human chromosome 15.</title>
        <authorList>
            <person name="Zody M.C."/>
            <person name="Garber M."/>
            <person name="Sharpe T."/>
            <person name="Young S.K."/>
            <person name="Rowen L."/>
            <person name="O'Neill K."/>
            <person name="Whittaker C.A."/>
            <person name="Kamal M."/>
            <person name="Chang J.L."/>
            <person name="Cuomo C.A."/>
            <person name="Dewar K."/>
            <person name="FitzGerald M.G."/>
            <person name="Kodira C.D."/>
            <person name="Madan A."/>
            <person name="Qin S."/>
            <person name="Yang X."/>
            <person name="Abbasi N."/>
            <person name="Abouelleil A."/>
            <person name="Arachchi H.M."/>
            <person name="Baradarani L."/>
            <person name="Birditt B."/>
            <person name="Bloom S."/>
            <person name="Bloom T."/>
            <person name="Borowsky M.L."/>
            <person name="Burke J."/>
            <person name="Butler J."/>
            <person name="Cook A."/>
            <person name="DeArellano K."/>
            <person name="DeCaprio D."/>
            <person name="Dorris L. III"/>
            <person name="Dors M."/>
            <person name="Eichler E.E."/>
            <person name="Engels R."/>
            <person name="Fahey J."/>
            <person name="Fleetwood P."/>
            <person name="Friedman C."/>
            <person name="Gearin G."/>
            <person name="Hall J.L."/>
            <person name="Hensley G."/>
            <person name="Johnson E."/>
            <person name="Jones C."/>
            <person name="Kamat A."/>
            <person name="Kaur A."/>
            <person name="Locke D.P."/>
            <person name="Madan A."/>
            <person name="Munson G."/>
            <person name="Jaffe D.B."/>
            <person name="Lui A."/>
            <person name="Macdonald P."/>
            <person name="Mauceli E."/>
            <person name="Naylor J.W."/>
            <person name="Nesbitt R."/>
            <person name="Nicol R."/>
            <person name="O'Leary S.B."/>
            <person name="Ratcliffe A."/>
            <person name="Rounsley S."/>
            <person name="She X."/>
            <person name="Sneddon K.M.B."/>
            <person name="Stewart S."/>
            <person name="Sougnez C."/>
            <person name="Stone S.M."/>
            <person name="Topham K."/>
            <person name="Vincent D."/>
            <person name="Wang S."/>
            <person name="Zimmer A.R."/>
            <person name="Birren B.W."/>
            <person name="Hood L."/>
            <person name="Lander E.S."/>
            <person name="Nusbaum C."/>
        </authorList>
    </citation>
    <scope>NUCLEOTIDE SEQUENCE [LARGE SCALE GENOMIC DNA]</scope>
</reference>
<reference key="3">
    <citation type="journal article" date="2004" name="Genome Res.">
        <title>The status, quality, and expansion of the NIH full-length cDNA project: the Mammalian Gene Collection (MGC).</title>
        <authorList>
            <consortium name="The MGC Project Team"/>
        </authorList>
    </citation>
    <scope>NUCLEOTIDE SEQUENCE [LARGE SCALE MRNA] (ISOFORM 2)</scope>
    <scope>VARIANTS GLY-43; HIS-54; GLY-64; ARG-191 AND PRO-235</scope>
</reference>
<proteinExistence type="evidence at protein level"/>
<gene>
    <name type="primary">GOLGA6L2</name>
</gene>
<dbReference type="EMBL" id="AK093463">
    <property type="protein sequence ID" value="BAC04173.1"/>
    <property type="molecule type" value="mRNA"/>
</dbReference>
<dbReference type="EMBL" id="AC073446">
    <property type="status" value="NOT_ANNOTATED_CDS"/>
    <property type="molecule type" value="Genomic_DNA"/>
</dbReference>
<dbReference type="EMBL" id="BC129820">
    <property type="protein sequence ID" value="AAI29821.1"/>
    <property type="status" value="ALT_INIT"/>
    <property type="molecule type" value="mRNA"/>
</dbReference>
<dbReference type="CCDS" id="CCDS76728.1">
    <molecule id="Q8N9W4-3"/>
</dbReference>
<dbReference type="RefSeq" id="NP_001291317.1">
    <molecule id="Q8N9W4-3"/>
    <property type="nucleotide sequence ID" value="NM_001304388.2"/>
</dbReference>
<dbReference type="SMR" id="Q8N9W4"/>
<dbReference type="FunCoup" id="Q8N9W4">
    <property type="interactions" value="2"/>
</dbReference>
<dbReference type="IntAct" id="Q8N9W4">
    <property type="interactions" value="33"/>
</dbReference>
<dbReference type="STRING" id="9606.ENSP00000454407"/>
<dbReference type="GlyGen" id="Q8N9W4">
    <property type="glycosylation" value="2 sites, 1 O-linked glycan (1 site)"/>
</dbReference>
<dbReference type="iPTMnet" id="Q8N9W4"/>
<dbReference type="MetOSite" id="Q8N9W4"/>
<dbReference type="PhosphoSitePlus" id="Q8N9W4"/>
<dbReference type="BioMuta" id="GOLGA6L2"/>
<dbReference type="DMDM" id="182662391"/>
<dbReference type="MassIVE" id="Q8N9W4"/>
<dbReference type="PaxDb" id="9606-ENSP00000454407"/>
<dbReference type="PeptideAtlas" id="Q8N9W4"/>
<dbReference type="ProteomicsDB" id="40926"/>
<dbReference type="ProteomicsDB" id="72593">
    <molecule id="Q8N9W4-1"/>
</dbReference>
<dbReference type="Antibodypedia" id="65204">
    <property type="antibodies" value="35 antibodies from 8 providers"/>
</dbReference>
<dbReference type="DNASU" id="283685"/>
<dbReference type="Ensembl" id="ENST00000567107.6">
    <molecule id="Q8N9W4-3"/>
    <property type="protein sequence ID" value="ENSP00000454407.1"/>
    <property type="gene ID" value="ENSG00000174450.13"/>
</dbReference>
<dbReference type="GeneID" id="283685"/>
<dbReference type="KEGG" id="hsa:283685"/>
<dbReference type="MANE-Select" id="ENST00000567107.6">
    <property type="protein sequence ID" value="ENSP00000454407.1"/>
    <property type="RefSeq nucleotide sequence ID" value="NM_001304388.2"/>
    <property type="RefSeq protein sequence ID" value="NP_001291317.1"/>
</dbReference>
<dbReference type="UCSC" id="uc059gsp.1">
    <molecule id="Q8N9W4-3"/>
    <property type="organism name" value="human"/>
</dbReference>
<dbReference type="AGR" id="HGNC:26695"/>
<dbReference type="CTD" id="283685"/>
<dbReference type="DisGeNET" id="283685"/>
<dbReference type="GeneCards" id="GOLGA6L2"/>
<dbReference type="HGNC" id="HGNC:26695">
    <property type="gene designation" value="GOLGA6L2"/>
</dbReference>
<dbReference type="HPA" id="ENSG00000174450">
    <property type="expression patterns" value="Tissue enriched (testis)"/>
</dbReference>
<dbReference type="neXtProt" id="NX_Q8N9W4"/>
<dbReference type="OpenTargets" id="ENSG00000174450"/>
<dbReference type="VEuPathDB" id="HostDB:ENSG00000174450"/>
<dbReference type="eggNOG" id="KOG3592">
    <property type="taxonomic scope" value="Eukaryota"/>
</dbReference>
<dbReference type="eggNOG" id="KOG4725">
    <property type="taxonomic scope" value="Eukaryota"/>
</dbReference>
<dbReference type="GeneTree" id="ENSGT00940000163338"/>
<dbReference type="HOGENOM" id="CLU_045921_1_0_1"/>
<dbReference type="InParanoid" id="Q8N9W4"/>
<dbReference type="OMA" id="AKECSML"/>
<dbReference type="OrthoDB" id="5978643at2759"/>
<dbReference type="PAN-GO" id="Q8N9W4">
    <property type="GO annotations" value="0 GO annotations based on evolutionary models"/>
</dbReference>
<dbReference type="TreeFam" id="TF316990"/>
<dbReference type="PathwayCommons" id="Q8N9W4"/>
<dbReference type="SignaLink" id="Q8N9W4"/>
<dbReference type="BioGRID-ORCS" id="283685">
    <property type="hits" value="3 hits in 265 CRISPR screens"/>
</dbReference>
<dbReference type="ChiTaRS" id="GOLGA6L2">
    <property type="organism name" value="human"/>
</dbReference>
<dbReference type="GenomeRNAi" id="283685"/>
<dbReference type="Pharos" id="Q8N9W4">
    <property type="development level" value="Tdark"/>
</dbReference>
<dbReference type="PRO" id="PR:Q8N9W4"/>
<dbReference type="Proteomes" id="UP000005640">
    <property type="component" value="Chromosome 15"/>
</dbReference>
<dbReference type="RNAct" id="Q8N9W4">
    <property type="molecule type" value="protein"/>
</dbReference>
<dbReference type="Bgee" id="ENSG00000174450">
    <property type="expression patterns" value="Expressed in left testis and 15 other cell types or tissues"/>
</dbReference>
<dbReference type="ExpressionAtlas" id="Q8N9W4">
    <property type="expression patterns" value="baseline and differential"/>
</dbReference>
<dbReference type="InterPro" id="IPR026737">
    <property type="entry name" value="GOLGA6L"/>
</dbReference>
<dbReference type="PANTHER" id="PTHR23143:SF31">
    <property type="entry name" value="GOLGIN SUBFAMILY A MEMBER 6-LIKE PROTEIN 1-RELATED"/>
    <property type="match status" value="1"/>
</dbReference>
<dbReference type="PANTHER" id="PTHR23143">
    <property type="entry name" value="TRICHOHYALIN-RELATED"/>
    <property type="match status" value="1"/>
</dbReference>
<name>GG6L2_HUMAN</name>
<evidence type="ECO:0000255" key="1"/>
<evidence type="ECO:0000256" key="2">
    <source>
        <dbReference type="SAM" id="MobiDB-lite"/>
    </source>
</evidence>
<evidence type="ECO:0000269" key="3">
    <source>
    </source>
</evidence>
<evidence type="ECO:0000269" key="4">
    <source>
    </source>
</evidence>
<evidence type="ECO:0000305" key="5"/>
<keyword id="KW-0025">Alternative splicing</keyword>
<keyword id="KW-0175">Coiled coil</keyword>
<keyword id="KW-1185">Reference proteome</keyword>
<comment type="interaction">
    <interactant intactId="EBI-10268729">
        <id>Q8N9W4-2</id>
    </interactant>
    <interactant intactId="EBI-741724">
        <id>Q8NA61</id>
        <label>CBY2</label>
    </interactant>
    <organismsDiffer>false</organismsDiffer>
    <experiments>3</experiments>
</comment>
<comment type="interaction">
    <interactant intactId="EBI-10268729">
        <id>Q8N9W4-2</id>
    </interactant>
    <interactant intactId="EBI-739467">
        <id>Q9H8Y8</id>
        <label>GORASP2</label>
    </interactant>
    <organismsDiffer>false</organismsDiffer>
    <experiments>3</experiments>
</comment>
<comment type="interaction">
    <interactant intactId="EBI-10268729">
        <id>Q8N9W4-2</id>
    </interactant>
    <interactant intactId="EBI-948001">
        <id>Q15323</id>
        <label>KRT31</label>
    </interactant>
    <organismsDiffer>false</organismsDiffer>
    <experiments>3</experiments>
</comment>
<comment type="interaction">
    <interactant intactId="EBI-10268729">
        <id>Q8N9W4-2</id>
    </interactant>
    <interactant intactId="EBI-1049638">
        <id>Q14525</id>
        <label>KRT33B</label>
    </interactant>
    <organismsDiffer>false</organismsDiffer>
    <experiments>3</experiments>
</comment>
<comment type="interaction">
    <interactant intactId="EBI-10268729">
        <id>Q8N9W4-2</id>
    </interactant>
    <interactant intactId="EBI-10171697">
        <id>Q6A162</id>
        <label>KRT40</label>
    </interactant>
    <organismsDiffer>false</organismsDiffer>
    <experiments>3</experiments>
</comment>
<comment type="interaction">
    <interactant intactId="EBI-10268729">
        <id>Q8N9W4-2</id>
    </interactant>
    <interactant intactId="EBI-751857">
        <id>O15481</id>
        <label>MAGEB4</label>
    </interactant>
    <organismsDiffer>false</organismsDiffer>
    <experiments>3</experiments>
</comment>
<comment type="interaction">
    <interactant intactId="EBI-10268729">
        <id>Q8N9W4-2</id>
    </interactant>
    <interactant intactId="EBI-11750983">
        <id>Q9HC98-4</id>
        <label>NEK6</label>
    </interactant>
    <organismsDiffer>false</organismsDiffer>
    <experiments>3</experiments>
</comment>
<comment type="alternative products">
    <event type="alternative splicing"/>
    <isoform>
        <id>Q8N9W4-3</id>
        <name>3</name>
        <sequence type="displayed"/>
    </isoform>
    <isoform>
        <id>Q8N9W4-1</id>
        <name>1</name>
        <sequence type="described" ref="VSP_059653 VSP_059654"/>
    </isoform>
    <isoform>
        <id>Q8N9W4-2</id>
        <name>2</name>
        <sequence type="described" ref="VSP_059650 VSP_059651 VSP_059652"/>
    </isoform>
</comment>
<comment type="similarity">
    <text evidence="5">Belongs to the GOLGA6 family.</text>
</comment>
<comment type="sequence caution" evidence="5">
    <conflict type="erroneous initiation">
        <sequence resource="EMBL-CDS" id="AAI29821"/>
    </conflict>
    <text>Truncated N-terminus.</text>
</comment>
<feature type="chain" id="PRO_0000320246" description="Golgin subfamily A member 6-like protein 2">
    <location>
        <begin position="1"/>
        <end position="909"/>
    </location>
</feature>
<feature type="region of interest" description="Disordered" evidence="2">
    <location>
        <begin position="1"/>
        <end position="88"/>
    </location>
</feature>
<feature type="region of interest" description="Disordered" evidence="2">
    <location>
        <begin position="300"/>
        <end position="362"/>
    </location>
</feature>
<feature type="region of interest" description="Disordered" evidence="2">
    <location>
        <begin position="381"/>
        <end position="408"/>
    </location>
</feature>
<feature type="region of interest" description="Disordered" evidence="2">
    <location>
        <begin position="425"/>
        <end position="494"/>
    </location>
</feature>
<feature type="region of interest" description="Disordered" evidence="2">
    <location>
        <begin position="524"/>
        <end position="909"/>
    </location>
</feature>
<feature type="coiled-coil region" evidence="1">
    <location>
        <begin position="192"/>
        <end position="526"/>
    </location>
</feature>
<feature type="compositionally biased region" description="Pro residues" evidence="2">
    <location>
        <begin position="1"/>
        <end position="11"/>
    </location>
</feature>
<feature type="compositionally biased region" description="Basic and acidic residues" evidence="2">
    <location>
        <begin position="13"/>
        <end position="31"/>
    </location>
</feature>
<feature type="compositionally biased region" description="Polar residues" evidence="2">
    <location>
        <begin position="53"/>
        <end position="77"/>
    </location>
</feature>
<feature type="compositionally biased region" description="Basic and acidic residues" evidence="2">
    <location>
        <begin position="78"/>
        <end position="88"/>
    </location>
</feature>
<feature type="compositionally biased region" description="Basic and acidic residues" evidence="2">
    <location>
        <begin position="425"/>
        <end position="478"/>
    </location>
</feature>
<feature type="compositionally biased region" description="Basic and acidic residues" evidence="2">
    <location>
        <begin position="524"/>
        <end position="542"/>
    </location>
</feature>
<feature type="compositionally biased region" description="Acidic residues" evidence="2">
    <location>
        <begin position="607"/>
        <end position="620"/>
    </location>
</feature>
<feature type="compositionally biased region" description="Gly residues" evidence="2">
    <location>
        <begin position="641"/>
        <end position="654"/>
    </location>
</feature>
<feature type="compositionally biased region" description="Gly residues" evidence="2">
    <location>
        <begin position="676"/>
        <end position="689"/>
    </location>
</feature>
<feature type="compositionally biased region" description="Basic residues" evidence="2">
    <location>
        <begin position="692"/>
        <end position="719"/>
    </location>
</feature>
<feature type="compositionally biased region" description="Low complexity" evidence="2">
    <location>
        <begin position="746"/>
        <end position="755"/>
    </location>
</feature>
<feature type="compositionally biased region" description="Acidic residues" evidence="2">
    <location>
        <begin position="757"/>
        <end position="766"/>
    </location>
</feature>
<feature type="compositionally biased region" description="Gly residues" evidence="2">
    <location>
        <begin position="791"/>
        <end position="871"/>
    </location>
</feature>
<feature type="compositionally biased region" description="Basic and acidic residues" evidence="2">
    <location>
        <begin position="872"/>
        <end position="892"/>
    </location>
</feature>
<feature type="splice variant" id="VSP_059650" description="In isoform 2.">
    <location>
        <begin position="308"/>
        <end position="362"/>
    </location>
</feature>
<feature type="splice variant" id="VSP_059651" description="In isoform 2.">
    <original>ERLWEQEKQMREQEQKMRDQEERMWEQDERLREKEERMREQEKMWEQVEKMREEKKMQEQEKKTRDQEEKMQEEERIREREKKMREEEETMREQEEKMQKQEENMW</original>
    <variation>MMREKEERIRDQKEKMQERLPEHEERCSEPCLPPSKVLCNMSHTGSVEPAGGEAGEGSPQDNPTAQEIMQLFCGMKNAQQCPGLGSTSCIPFFYRGDKRKMKIINI</variation>
    <location>
        <begin position="376"/>
        <end position="481"/>
    </location>
</feature>
<feature type="splice variant" id="VSP_059652" description="In isoform 2.">
    <location>
        <begin position="482"/>
        <end position="909"/>
    </location>
</feature>
<feature type="splice variant" id="VSP_059653" description="In isoform 1.">
    <original>DVETGGEAAGAGEADVGAGGEDAGSGAEDVGPGGEDVGAGREAAGEGGENAGAEEDVAAGGEDAGGEEDAGAGEEDMGPGGEDARGGEDAGAGEEDAGGGGDDAGAG</original>
    <variation>EEMREKEERIRDQKEKMQERLPEHEERCSEPCLPPSKVLCNMSHTGSVEPAGGEAGEGSPQDNPTAQEIMQLFCGMKNAQQCPGLGSTSCIPFFYRGDKRKMKIINI</variation>
    <location>
        <begin position="544"/>
        <end position="650"/>
    </location>
</feature>
<feature type="splice variant" id="VSP_059654" description="In isoform 1.">
    <location>
        <begin position="651"/>
        <end position="909"/>
    </location>
</feature>
<feature type="sequence variant" id="VAR_039173" description="In dbSNP:rs2344900." evidence="3 4">
    <original>R</original>
    <variation>G</variation>
    <location>
        <position position="43"/>
    </location>
</feature>
<feature type="sequence variant" id="VAR_039174" description="In dbSNP:rs3866720." evidence="3 4">
    <original>N</original>
    <variation>H</variation>
    <location>
        <position position="54"/>
    </location>
</feature>
<feature type="sequence variant" id="VAR_039175" description="In dbSNP:rs2344899." evidence="3 4">
    <original>E</original>
    <variation>G</variation>
    <location>
        <position position="64"/>
    </location>
</feature>
<feature type="sequence variant" id="VAR_039176" description="In dbSNP:rs4778531." evidence="3 4">
    <original>W</original>
    <variation>R</variation>
    <location>
        <position position="191"/>
    </location>
</feature>
<feature type="sequence variant" id="VAR_039177" description="In dbSNP:rs12594944." evidence="3 4">
    <original>R</original>
    <variation>P</variation>
    <location>
        <position position="235"/>
    </location>
</feature>
<feature type="sequence conflict" description="In Ref. 1; BAC04173." evidence="5" ref="1">
    <original>R</original>
    <variation>W</variation>
    <location>
        <position position="317"/>
    </location>
</feature>
<feature type="sequence conflict" description="In Ref. 1; BAC04173." evidence="5" ref="1">
    <original>RQ</original>
    <variation>QE</variation>
    <location>
        <begin position="535"/>
        <end position="536"/>
    </location>
</feature>
<feature type="sequence conflict" description="In Ref. 1; BAC04173." evidence="5" ref="1">
    <original>RE</original>
    <variation>WG</variation>
    <location>
        <begin position="540"/>
        <end position="541"/>
    </location>
</feature>
<feature type="sequence conflict" description="In Ref. 1; BAC04173." evidence="5" ref="1">
    <original>E</original>
    <variation>M</variation>
    <location sequence="Q8N9W4-1">
        <position position="545"/>
    </location>
</feature>
<organism>
    <name type="scientific">Homo sapiens</name>
    <name type="common">Human</name>
    <dbReference type="NCBI Taxonomy" id="9606"/>
    <lineage>
        <taxon>Eukaryota</taxon>
        <taxon>Metazoa</taxon>
        <taxon>Chordata</taxon>
        <taxon>Craniata</taxon>
        <taxon>Vertebrata</taxon>
        <taxon>Euteleostomi</taxon>
        <taxon>Mammalia</taxon>
        <taxon>Eutheria</taxon>
        <taxon>Euarchontoglires</taxon>
        <taxon>Primates</taxon>
        <taxon>Haplorrhini</taxon>
        <taxon>Catarrhini</taxon>
        <taxon>Hominidae</taxon>
        <taxon>Homo</taxon>
    </lineage>
</organism>
<protein>
    <recommendedName>
        <fullName>Golgin subfamily A member 6-like protein 2</fullName>
    </recommendedName>
</protein>